<accession>Q9FJD6</accession>
<gene>
    <name type="primary">RBOHH</name>
    <name type="ordered locus">At5g60010</name>
    <name type="ORF">MMN10.18</name>
</gene>
<dbReference type="EC" id="1.11.1.-"/>
<dbReference type="EC" id="1.6.3.-"/>
<dbReference type="EMBL" id="AB015475">
    <property type="protein sequence ID" value="BAB08369.1"/>
    <property type="molecule type" value="Genomic_DNA"/>
</dbReference>
<dbReference type="EMBL" id="CP002688">
    <property type="protein sequence ID" value="AED97266.1"/>
    <property type="molecule type" value="Genomic_DNA"/>
</dbReference>
<dbReference type="RefSeq" id="NP_200809.4">
    <property type="nucleotide sequence ID" value="NM_125394.5"/>
</dbReference>
<dbReference type="SMR" id="Q9FJD6"/>
<dbReference type="FunCoup" id="Q9FJD6">
    <property type="interactions" value="282"/>
</dbReference>
<dbReference type="STRING" id="3702.Q9FJD6"/>
<dbReference type="PeroxiBase" id="3281">
    <property type="entry name" value="AtRboh08"/>
</dbReference>
<dbReference type="iPTMnet" id="Q9FJD6"/>
<dbReference type="PaxDb" id="3702-AT5G60010.1"/>
<dbReference type="ProteomicsDB" id="236527"/>
<dbReference type="EnsemblPlants" id="AT5G60010.1">
    <property type="protein sequence ID" value="AT5G60010.1"/>
    <property type="gene ID" value="AT5G60010"/>
</dbReference>
<dbReference type="GeneID" id="836123"/>
<dbReference type="Gramene" id="AT5G60010.1">
    <property type="protein sequence ID" value="AT5G60010.1"/>
    <property type="gene ID" value="AT5G60010"/>
</dbReference>
<dbReference type="KEGG" id="ath:AT5G60010"/>
<dbReference type="Araport" id="AT5G60010"/>
<dbReference type="TAIR" id="AT5G60010">
    <property type="gene designation" value="RBOHH"/>
</dbReference>
<dbReference type="eggNOG" id="KOG0039">
    <property type="taxonomic scope" value="Eukaryota"/>
</dbReference>
<dbReference type="HOGENOM" id="CLU_005646_6_0_1"/>
<dbReference type="InParanoid" id="Q9FJD6"/>
<dbReference type="OMA" id="FTFAKEH"/>
<dbReference type="PhylomeDB" id="Q9FJD6"/>
<dbReference type="BioCyc" id="ARA:AT5G60010-MONOMER"/>
<dbReference type="PRO" id="PR:Q9FJD6"/>
<dbReference type="Proteomes" id="UP000006548">
    <property type="component" value="Chromosome 5"/>
</dbReference>
<dbReference type="ExpressionAtlas" id="Q9FJD6">
    <property type="expression patterns" value="baseline and differential"/>
</dbReference>
<dbReference type="GO" id="GO:0016020">
    <property type="term" value="C:membrane"/>
    <property type="evidence" value="ECO:0007669"/>
    <property type="project" value="UniProtKB-SubCell"/>
</dbReference>
<dbReference type="GO" id="GO:0005509">
    <property type="term" value="F:calcium ion binding"/>
    <property type="evidence" value="ECO:0007669"/>
    <property type="project" value="InterPro"/>
</dbReference>
<dbReference type="GO" id="GO:0050664">
    <property type="term" value="F:oxidoreductase activity, acting on NAD(P)H, oxygen as acceptor"/>
    <property type="evidence" value="ECO:0007669"/>
    <property type="project" value="InterPro"/>
</dbReference>
<dbReference type="GO" id="GO:0004601">
    <property type="term" value="F:peroxidase activity"/>
    <property type="evidence" value="ECO:0007669"/>
    <property type="project" value="UniProtKB-KW"/>
</dbReference>
<dbReference type="CDD" id="cd06186">
    <property type="entry name" value="NOX_Duox_like_FAD_NADP"/>
    <property type="match status" value="1"/>
</dbReference>
<dbReference type="FunFam" id="2.40.30.10:FF:000059">
    <property type="entry name" value="dual oxidase isoform X1"/>
    <property type="match status" value="1"/>
</dbReference>
<dbReference type="FunFam" id="3.40.50.80:FF:000026">
    <property type="entry name" value="Putative respiratory burst oxidase"/>
    <property type="match status" value="1"/>
</dbReference>
<dbReference type="FunFam" id="1.10.238.10:FF:000049">
    <property type="entry name" value="Respiratory burst oxidase homolog A"/>
    <property type="match status" value="1"/>
</dbReference>
<dbReference type="Gene3D" id="1.10.238.10">
    <property type="entry name" value="EF-hand"/>
    <property type="match status" value="1"/>
</dbReference>
<dbReference type="Gene3D" id="3.40.50.80">
    <property type="entry name" value="Nucleotide-binding domain of ferredoxin-NADP reductase (FNR) module"/>
    <property type="match status" value="1"/>
</dbReference>
<dbReference type="Gene3D" id="2.40.30.10">
    <property type="entry name" value="Translation factors"/>
    <property type="match status" value="1"/>
</dbReference>
<dbReference type="InterPro" id="IPR000778">
    <property type="entry name" value="Cyt_b245_heavy_chain"/>
</dbReference>
<dbReference type="InterPro" id="IPR011992">
    <property type="entry name" value="EF-hand-dom_pair"/>
</dbReference>
<dbReference type="InterPro" id="IPR018247">
    <property type="entry name" value="EF_Hand_1_Ca_BS"/>
</dbReference>
<dbReference type="InterPro" id="IPR002048">
    <property type="entry name" value="EF_hand_dom"/>
</dbReference>
<dbReference type="InterPro" id="IPR013112">
    <property type="entry name" value="FAD-bd_8"/>
</dbReference>
<dbReference type="InterPro" id="IPR017927">
    <property type="entry name" value="FAD-bd_FR_type"/>
</dbReference>
<dbReference type="InterPro" id="IPR013130">
    <property type="entry name" value="Fe3_Rdtase_TM_dom"/>
</dbReference>
<dbReference type="InterPro" id="IPR013121">
    <property type="entry name" value="Fe_red_NAD-bd_6"/>
</dbReference>
<dbReference type="InterPro" id="IPR039261">
    <property type="entry name" value="FNR_nucleotide-bd"/>
</dbReference>
<dbReference type="InterPro" id="IPR013623">
    <property type="entry name" value="NADPH_Ox"/>
</dbReference>
<dbReference type="InterPro" id="IPR050369">
    <property type="entry name" value="RBOH/FRE"/>
</dbReference>
<dbReference type="InterPro" id="IPR017938">
    <property type="entry name" value="Riboflavin_synthase-like_b-brl"/>
</dbReference>
<dbReference type="PANTHER" id="PTHR11972">
    <property type="entry name" value="NADPH OXIDASE"/>
    <property type="match status" value="1"/>
</dbReference>
<dbReference type="PANTHER" id="PTHR11972:SF137">
    <property type="entry name" value="RESPIRATORY BURST OXIDASE HOMOLOG PROTEIN H-RELATED"/>
    <property type="match status" value="1"/>
</dbReference>
<dbReference type="Pfam" id="PF08022">
    <property type="entry name" value="FAD_binding_8"/>
    <property type="match status" value="1"/>
</dbReference>
<dbReference type="Pfam" id="PF01794">
    <property type="entry name" value="Ferric_reduct"/>
    <property type="match status" value="1"/>
</dbReference>
<dbReference type="Pfam" id="PF08030">
    <property type="entry name" value="NAD_binding_6"/>
    <property type="match status" value="1"/>
</dbReference>
<dbReference type="Pfam" id="PF08414">
    <property type="entry name" value="NADPH_Ox"/>
    <property type="match status" value="1"/>
</dbReference>
<dbReference type="PRINTS" id="PR00466">
    <property type="entry name" value="GP91PHOX"/>
</dbReference>
<dbReference type="SFLD" id="SFLDG01169">
    <property type="entry name" value="NADPH_oxidase_subgroup_(NOX)"/>
    <property type="match status" value="1"/>
</dbReference>
<dbReference type="SUPFAM" id="SSF47473">
    <property type="entry name" value="EF-hand"/>
    <property type="match status" value="1"/>
</dbReference>
<dbReference type="SUPFAM" id="SSF52343">
    <property type="entry name" value="Ferredoxin reductase-like, C-terminal NADP-linked domain"/>
    <property type="match status" value="1"/>
</dbReference>
<dbReference type="SUPFAM" id="SSF63380">
    <property type="entry name" value="Riboflavin synthase domain-like"/>
    <property type="match status" value="1"/>
</dbReference>
<dbReference type="PROSITE" id="PS00018">
    <property type="entry name" value="EF_HAND_1"/>
    <property type="match status" value="1"/>
</dbReference>
<dbReference type="PROSITE" id="PS50222">
    <property type="entry name" value="EF_HAND_2"/>
    <property type="match status" value="2"/>
</dbReference>
<dbReference type="PROSITE" id="PS51384">
    <property type="entry name" value="FAD_FR"/>
    <property type="match status" value="1"/>
</dbReference>
<comment type="function">
    <text>Calcium-dependent NADPH oxidase that generates superoxide.</text>
</comment>
<comment type="subunit">
    <text evidence="1">Monomer and homodimer.</text>
</comment>
<comment type="subcellular location">
    <subcellularLocation>
        <location evidence="7">Membrane</location>
        <topology evidence="7">Multi-pass membrane protein</topology>
    </subcellularLocation>
</comment>
<comment type="similarity">
    <text evidence="7">Belongs to the RBOH (TC 5.B.1.3) family.</text>
</comment>
<protein>
    <recommendedName>
        <fullName>Putative respiratory burst oxidase homolog protein H</fullName>
        <ecNumber>1.11.1.-</ecNumber>
        <ecNumber>1.6.3.-</ecNumber>
    </recommendedName>
    <alternativeName>
        <fullName>NADPH oxidase RBOHH</fullName>
        <shortName>AtRBOHH</shortName>
    </alternativeName>
</protein>
<proteinExistence type="inferred from homology"/>
<reference key="1">
    <citation type="journal article" date="1998" name="DNA Res.">
        <title>Structural analysis of Arabidopsis thaliana chromosome 5. VII. Sequence features of the regions of 1,013,767 bp covered by sixteen physically assigned P1 and TAC clones.</title>
        <authorList>
            <person name="Nakamura Y."/>
            <person name="Sato S."/>
            <person name="Asamizu E."/>
            <person name="Kaneko T."/>
            <person name="Kotani H."/>
            <person name="Miyajima N."/>
            <person name="Tabata S."/>
        </authorList>
    </citation>
    <scope>NUCLEOTIDE SEQUENCE [LARGE SCALE GENOMIC DNA]</scope>
    <source>
        <strain>cv. Columbia</strain>
    </source>
</reference>
<reference key="2">
    <citation type="journal article" date="2017" name="Plant J.">
        <title>Araport11: a complete reannotation of the Arabidopsis thaliana reference genome.</title>
        <authorList>
            <person name="Cheng C.Y."/>
            <person name="Krishnakumar V."/>
            <person name="Chan A.P."/>
            <person name="Thibaud-Nissen F."/>
            <person name="Schobel S."/>
            <person name="Town C.D."/>
        </authorList>
    </citation>
    <scope>GENOME REANNOTATION</scope>
    <source>
        <strain>cv. Columbia</strain>
    </source>
</reference>
<reference key="3">
    <citation type="journal article" date="2006" name="Plant Physiol.">
        <title>Production of reactive oxygen species by plant NADPH oxidases.</title>
        <authorList>
            <person name="Sagi M."/>
            <person name="Fluhr R."/>
        </authorList>
    </citation>
    <scope>GENE FAMILY</scope>
    <scope>NOMENCLATURE</scope>
</reference>
<keyword id="KW-0106">Calcium</keyword>
<keyword id="KW-0274">FAD</keyword>
<keyword id="KW-0285">Flavoprotein</keyword>
<keyword id="KW-0472">Membrane</keyword>
<keyword id="KW-0479">Metal-binding</keyword>
<keyword id="KW-0521">NADP</keyword>
<keyword id="KW-0560">Oxidoreductase</keyword>
<keyword id="KW-0575">Peroxidase</keyword>
<keyword id="KW-0597">Phosphoprotein</keyword>
<keyword id="KW-1185">Reference proteome</keyword>
<keyword id="KW-0677">Repeat</keyword>
<keyword id="KW-0812">Transmembrane</keyword>
<keyword id="KW-1133">Transmembrane helix</keyword>
<sequence>MKSNTPTEDSTKWMLESVEIDSMGESSSKEPEINLNKNEGGLKKNASRNLGVGSIIRTLSVSNWRKSGNLGSPSTRKSGNLGPPTNAVPKKTGPQRVERTTSSAARGLQSLRFLDRTVTGRERDAWRSIENRFNQFSVDGKLPKEKFGVCIGMGDTMEFAAEVYEALGRRRQIETENGIDKEQLKLFWEDMIKKDLDCRLQIFFDMCDKNGDGKLTEEEVKEVIVLSASANRLGNLKKNAAAYASLIMEELDPDHKGYIEMWQLEILLTGMVTNADTEKMKKSQTLTRAMIPERYRTPMSKYVSVTAELMHENWKKLWVLALWAIINVYLFMWKYEEFMRNPLYNITGRCVCAAKGAAETLKLNMALILVPVCRKTLTILRSTFLNRVVPFDDNINFHKVIAYMIAFQALLHTALHIFCNYPRLSSCSYDVFLTYAGAALGNTQPSYLGLMLTSVSITGVLMIFFMGFSFTLAMHYFRRNIVKLPKPFNVLAGFNAFWYAHHLLVLAYILLIIHGYYLIIEKPWYQKTTWMYLAVPMLFYASERLFSRLLQEHSHRVNVIKAIVYSGNVLALYVTKPPGFKYKSGMYMFVKCPDLSKFEWHPFSITSAPGDDYLSVHIRALGDWTTELRSRFAKTCEPTQAAAKPKPNSLMRMETRAAGVNPHIEESQVLFPKIFIKGPYGAPAQNYQKFDILLLVGLGIGATPFISILKDMLNHLKPGIPRSGQKYEGSVGGESIGGDSVSGGGGKKFPQRAYFFWVTREQASFDWFKGVMDDIAEYDKTHVIEMHNYLTSMYEAGDARSALIAMVQKLQHAKNGVDIVSESRIRTHFARPNWRKVFSELSSKHEACRIGVFYCGSPTLVRPLKELCQEFSLESSTRFTFHKENF</sequence>
<name>RBOHH_ARATH</name>
<organism>
    <name type="scientific">Arabidopsis thaliana</name>
    <name type="common">Mouse-ear cress</name>
    <dbReference type="NCBI Taxonomy" id="3702"/>
    <lineage>
        <taxon>Eukaryota</taxon>
        <taxon>Viridiplantae</taxon>
        <taxon>Streptophyta</taxon>
        <taxon>Embryophyta</taxon>
        <taxon>Tracheophyta</taxon>
        <taxon>Spermatophyta</taxon>
        <taxon>Magnoliopsida</taxon>
        <taxon>eudicotyledons</taxon>
        <taxon>Gunneridae</taxon>
        <taxon>Pentapetalae</taxon>
        <taxon>rosids</taxon>
        <taxon>malvids</taxon>
        <taxon>Brassicales</taxon>
        <taxon>Brassicaceae</taxon>
        <taxon>Camelineae</taxon>
        <taxon>Arabidopsis</taxon>
    </lineage>
</organism>
<feature type="chain" id="PRO_0000313760" description="Putative respiratory burst oxidase homolog protein H">
    <location>
        <begin position="1"/>
        <end position="886"/>
    </location>
</feature>
<feature type="topological domain" description="Cytoplasmic" evidence="3">
    <location>
        <begin position="1"/>
        <end position="316"/>
    </location>
</feature>
<feature type="transmembrane region" description="Helical; Name=1" evidence="3">
    <location>
        <begin position="317"/>
        <end position="337"/>
    </location>
</feature>
<feature type="topological domain" description="Extracellular" evidence="3">
    <location>
        <begin position="338"/>
        <end position="404"/>
    </location>
</feature>
<feature type="transmembrane region" description="Helical; Name=2" evidence="3">
    <location>
        <begin position="405"/>
        <end position="421"/>
    </location>
</feature>
<feature type="topological domain" description="Cytoplasmic" evidence="3">
    <location>
        <begin position="422"/>
        <end position="456"/>
    </location>
</feature>
<feature type="transmembrane region" description="Helical; Name=3" evidence="3">
    <location>
        <begin position="457"/>
        <end position="477"/>
    </location>
</feature>
<feature type="topological domain" description="Extracellular" evidence="3">
    <location>
        <begin position="478"/>
        <end position="499"/>
    </location>
</feature>
<feature type="transmembrane region" description="Helical; Name=4" evidence="3">
    <location>
        <begin position="500"/>
        <end position="520"/>
    </location>
</feature>
<feature type="topological domain" description="Cytoplasmic" evidence="3">
    <location>
        <begin position="521"/>
        <end position="528"/>
    </location>
</feature>
<feature type="transmembrane region" description="Helical; Name=5" evidence="1">
    <location>
        <begin position="529"/>
        <end position="546"/>
    </location>
</feature>
<feature type="topological domain" description="Extracellular" evidence="3">
    <location>
        <begin position="547"/>
        <end position="688"/>
    </location>
</feature>
<feature type="transmembrane region" description="Helical; Name=6" evidence="3">
    <location>
        <begin position="689"/>
        <end position="709"/>
    </location>
</feature>
<feature type="topological domain" description="Cytoplasmic" evidence="3">
    <location>
        <begin position="710"/>
        <end position="886"/>
    </location>
</feature>
<feature type="domain" description="EF-hand 1" evidence="4">
    <location>
        <begin position="195"/>
        <end position="230"/>
    </location>
</feature>
<feature type="domain" description="EF-hand 2" evidence="4">
    <location>
        <begin position="239"/>
        <end position="274"/>
    </location>
</feature>
<feature type="domain" description="Ferric oxidoreductase">
    <location>
        <begin position="355"/>
        <end position="512"/>
    </location>
</feature>
<feature type="domain" description="FAD-binding FR-type" evidence="5">
    <location>
        <begin position="552"/>
        <end position="686"/>
    </location>
</feature>
<feature type="region of interest" description="Disordered" evidence="6">
    <location>
        <begin position="1"/>
        <end position="46"/>
    </location>
</feature>
<feature type="region of interest" description="Disordered" evidence="6">
    <location>
        <begin position="64"/>
        <end position="103"/>
    </location>
</feature>
<feature type="region of interest" description="EF-hand-like 1" evidence="1">
    <location>
        <begin position="137"/>
        <end position="145"/>
    </location>
</feature>
<feature type="region of interest" description="EF-hand-like 2" evidence="1">
    <location>
        <begin position="171"/>
        <end position="183"/>
    </location>
</feature>
<feature type="compositionally biased region" description="Polar residues" evidence="6">
    <location>
        <begin position="64"/>
        <end position="78"/>
    </location>
</feature>
<feature type="binding site" evidence="4">
    <location>
        <position position="208"/>
    </location>
    <ligand>
        <name>Ca(2+)</name>
        <dbReference type="ChEBI" id="CHEBI:29108"/>
    </ligand>
</feature>
<feature type="binding site" evidence="4">
    <location>
        <position position="210"/>
    </location>
    <ligand>
        <name>Ca(2+)</name>
        <dbReference type="ChEBI" id="CHEBI:29108"/>
    </ligand>
</feature>
<feature type="binding site" evidence="4">
    <location>
        <position position="212"/>
    </location>
    <ligand>
        <name>Ca(2+)</name>
        <dbReference type="ChEBI" id="CHEBI:29108"/>
    </ligand>
</feature>
<feature type="binding site" evidence="4">
    <location>
        <position position="214"/>
    </location>
    <ligand>
        <name>Ca(2+)</name>
        <dbReference type="ChEBI" id="CHEBI:29108"/>
    </ligand>
</feature>
<feature type="binding site" evidence="4">
    <location>
        <position position="219"/>
    </location>
    <ligand>
        <name>Ca(2+)</name>
        <dbReference type="ChEBI" id="CHEBI:29108"/>
    </ligand>
</feature>
<feature type="modified residue" description="Phosphoserine" evidence="2">
    <location>
        <position position="283"/>
    </location>
</feature>
<evidence type="ECO:0000250" key="1"/>
<evidence type="ECO:0000250" key="2">
    <source>
        <dbReference type="UniProtKB" id="Q9FIJ0"/>
    </source>
</evidence>
<evidence type="ECO:0000255" key="3"/>
<evidence type="ECO:0000255" key="4">
    <source>
        <dbReference type="PROSITE-ProRule" id="PRU00448"/>
    </source>
</evidence>
<evidence type="ECO:0000255" key="5">
    <source>
        <dbReference type="PROSITE-ProRule" id="PRU00716"/>
    </source>
</evidence>
<evidence type="ECO:0000256" key="6">
    <source>
        <dbReference type="SAM" id="MobiDB-lite"/>
    </source>
</evidence>
<evidence type="ECO:0000305" key="7"/>